<accession>Q7MHS7</accession>
<protein>
    <recommendedName>
        <fullName evidence="1">S-ribosylhomocysteine lyase</fullName>
        <ecNumber evidence="1">4.4.1.21</ecNumber>
    </recommendedName>
    <alternativeName>
        <fullName evidence="1">AI-2 synthesis protein</fullName>
    </alternativeName>
    <alternativeName>
        <fullName evidence="1">Autoinducer-2 production protein LuxS</fullName>
    </alternativeName>
</protein>
<comment type="function">
    <text evidence="1">Involved in the synthesis of autoinducer 2 (AI-2) which is secreted by bacteria and is used to communicate both the cell density and the metabolic potential of the environment. The regulation of gene expression in response to changes in cell density is called quorum sensing. Catalyzes the transformation of S-ribosylhomocysteine (RHC) to homocysteine (HC) and 4,5-dihydroxy-2,3-pentadione (DPD).</text>
</comment>
<comment type="catalytic activity">
    <reaction evidence="1">
        <text>S-(5-deoxy-D-ribos-5-yl)-L-homocysteine = (S)-4,5-dihydroxypentane-2,3-dione + L-homocysteine</text>
        <dbReference type="Rhea" id="RHEA:17753"/>
        <dbReference type="ChEBI" id="CHEBI:29484"/>
        <dbReference type="ChEBI" id="CHEBI:58195"/>
        <dbReference type="ChEBI" id="CHEBI:58199"/>
        <dbReference type="EC" id="4.4.1.21"/>
    </reaction>
</comment>
<comment type="cofactor">
    <cofactor evidence="1">
        <name>Fe cation</name>
        <dbReference type="ChEBI" id="CHEBI:24875"/>
    </cofactor>
    <text evidence="1">Binds 1 Fe cation per subunit.</text>
</comment>
<comment type="subunit">
    <text evidence="1">Homodimer.</text>
</comment>
<comment type="similarity">
    <text evidence="1">Belongs to the LuxS family.</text>
</comment>
<sequence length="172" mass="18900">MPLLDSFTVDHTRMHAPAVRVAKTMQTPKGDTITVFDLRFTAPNKDILSEKGIHTLEHLYAGFMRKHLNGASVEIIDISPMGCRTGFYMSLIGAPSEQDVASAWTASMEDVLKVESQNKIPELNEYQCGTAAMHSLDEAKQIAQNILAAGISVNKNDELALPEAMLKELKVD</sequence>
<organism>
    <name type="scientific">Vibrio vulnificus (strain YJ016)</name>
    <dbReference type="NCBI Taxonomy" id="196600"/>
    <lineage>
        <taxon>Bacteria</taxon>
        <taxon>Pseudomonadati</taxon>
        <taxon>Pseudomonadota</taxon>
        <taxon>Gammaproteobacteria</taxon>
        <taxon>Vibrionales</taxon>
        <taxon>Vibrionaceae</taxon>
        <taxon>Vibrio</taxon>
    </lineage>
</organism>
<evidence type="ECO:0000255" key="1">
    <source>
        <dbReference type="HAMAP-Rule" id="MF_00091"/>
    </source>
</evidence>
<gene>
    <name evidence="1" type="primary">luxS</name>
    <name type="ordered locus">VV2792</name>
</gene>
<name>LUXS_VIBVY</name>
<dbReference type="EC" id="4.4.1.21" evidence="1"/>
<dbReference type="EMBL" id="BA000037">
    <property type="protein sequence ID" value="BAC95556.1"/>
    <property type="molecule type" value="Genomic_DNA"/>
</dbReference>
<dbReference type="RefSeq" id="WP_011079537.1">
    <property type="nucleotide sequence ID" value="NC_005139.1"/>
</dbReference>
<dbReference type="SMR" id="Q7MHS7"/>
<dbReference type="STRING" id="672.VV93_v1c25030"/>
<dbReference type="KEGG" id="vvy:VV2792"/>
<dbReference type="eggNOG" id="COG1854">
    <property type="taxonomic scope" value="Bacteria"/>
</dbReference>
<dbReference type="HOGENOM" id="CLU_107531_2_0_6"/>
<dbReference type="Proteomes" id="UP000002675">
    <property type="component" value="Chromosome I"/>
</dbReference>
<dbReference type="GO" id="GO:0005506">
    <property type="term" value="F:iron ion binding"/>
    <property type="evidence" value="ECO:0007669"/>
    <property type="project" value="InterPro"/>
</dbReference>
<dbReference type="GO" id="GO:0043768">
    <property type="term" value="F:S-ribosylhomocysteine lyase activity"/>
    <property type="evidence" value="ECO:0007669"/>
    <property type="project" value="UniProtKB-UniRule"/>
</dbReference>
<dbReference type="GO" id="GO:0009372">
    <property type="term" value="P:quorum sensing"/>
    <property type="evidence" value="ECO:0007669"/>
    <property type="project" value="UniProtKB-UniRule"/>
</dbReference>
<dbReference type="FunFam" id="3.30.1360.80:FF:000001">
    <property type="entry name" value="S-ribosylhomocysteine lyase"/>
    <property type="match status" value="1"/>
</dbReference>
<dbReference type="Gene3D" id="3.30.1360.80">
    <property type="entry name" value="S-ribosylhomocysteinase (LuxS)"/>
    <property type="match status" value="1"/>
</dbReference>
<dbReference type="HAMAP" id="MF_00091">
    <property type="entry name" value="LuxS"/>
    <property type="match status" value="1"/>
</dbReference>
<dbReference type="InterPro" id="IPR037005">
    <property type="entry name" value="LuxS_sf"/>
</dbReference>
<dbReference type="InterPro" id="IPR011249">
    <property type="entry name" value="Metalloenz_LuxS/M16"/>
</dbReference>
<dbReference type="InterPro" id="IPR003815">
    <property type="entry name" value="S-ribosylhomocysteinase"/>
</dbReference>
<dbReference type="NCBIfam" id="NF002602">
    <property type="entry name" value="PRK02260.1-2"/>
    <property type="match status" value="1"/>
</dbReference>
<dbReference type="PANTHER" id="PTHR35799">
    <property type="entry name" value="S-RIBOSYLHOMOCYSTEINE LYASE"/>
    <property type="match status" value="1"/>
</dbReference>
<dbReference type="PANTHER" id="PTHR35799:SF1">
    <property type="entry name" value="S-RIBOSYLHOMOCYSTEINE LYASE"/>
    <property type="match status" value="1"/>
</dbReference>
<dbReference type="Pfam" id="PF02664">
    <property type="entry name" value="LuxS"/>
    <property type="match status" value="1"/>
</dbReference>
<dbReference type="PIRSF" id="PIRSF006160">
    <property type="entry name" value="AI2"/>
    <property type="match status" value="1"/>
</dbReference>
<dbReference type="PRINTS" id="PR01487">
    <property type="entry name" value="LUXSPROTEIN"/>
</dbReference>
<dbReference type="SUPFAM" id="SSF63411">
    <property type="entry name" value="LuxS/MPP-like metallohydrolase"/>
    <property type="match status" value="1"/>
</dbReference>
<reference key="1">
    <citation type="journal article" date="2003" name="Genome Res.">
        <title>Comparative genome analysis of Vibrio vulnificus, a marine pathogen.</title>
        <authorList>
            <person name="Chen C.-Y."/>
            <person name="Wu K.-M."/>
            <person name="Chang Y.-C."/>
            <person name="Chang C.-H."/>
            <person name="Tsai H.-C."/>
            <person name="Liao T.-L."/>
            <person name="Liu Y.-M."/>
            <person name="Chen H.-J."/>
            <person name="Shen A.B.-T."/>
            <person name="Li J.-C."/>
            <person name="Su T.-L."/>
            <person name="Shao C.-P."/>
            <person name="Lee C.-T."/>
            <person name="Hor L.-I."/>
            <person name="Tsai S.-F."/>
        </authorList>
    </citation>
    <scope>NUCLEOTIDE SEQUENCE [LARGE SCALE GENOMIC DNA]</scope>
    <source>
        <strain>YJ016</strain>
    </source>
</reference>
<proteinExistence type="inferred from homology"/>
<feature type="chain" id="PRO_0000172278" description="S-ribosylhomocysteine lyase">
    <location>
        <begin position="1"/>
        <end position="172"/>
    </location>
</feature>
<feature type="binding site" evidence="1">
    <location>
        <position position="54"/>
    </location>
    <ligand>
        <name>Fe cation</name>
        <dbReference type="ChEBI" id="CHEBI:24875"/>
    </ligand>
</feature>
<feature type="binding site" evidence="1">
    <location>
        <position position="58"/>
    </location>
    <ligand>
        <name>Fe cation</name>
        <dbReference type="ChEBI" id="CHEBI:24875"/>
    </ligand>
</feature>
<feature type="binding site" evidence="1">
    <location>
        <position position="128"/>
    </location>
    <ligand>
        <name>Fe cation</name>
        <dbReference type="ChEBI" id="CHEBI:24875"/>
    </ligand>
</feature>
<keyword id="KW-0071">Autoinducer synthesis</keyword>
<keyword id="KW-0408">Iron</keyword>
<keyword id="KW-0456">Lyase</keyword>
<keyword id="KW-0479">Metal-binding</keyword>
<keyword id="KW-0673">Quorum sensing</keyword>